<protein>
    <recommendedName>
        <fullName evidence="1">Small ribosomal subunit protein uS4</fullName>
    </recommendedName>
    <alternativeName>
        <fullName evidence="2">30S ribosomal protein S4</fullName>
    </alternativeName>
</protein>
<accession>B2S0W1</accession>
<organism>
    <name type="scientific">Borrelia hermsii (strain HS1 / DAH)</name>
    <dbReference type="NCBI Taxonomy" id="314723"/>
    <lineage>
        <taxon>Bacteria</taxon>
        <taxon>Pseudomonadati</taxon>
        <taxon>Spirochaetota</taxon>
        <taxon>Spirochaetia</taxon>
        <taxon>Spirochaetales</taxon>
        <taxon>Borreliaceae</taxon>
        <taxon>Borrelia</taxon>
    </lineage>
</organism>
<feature type="chain" id="PRO_1000140692" description="Small ribosomal subunit protein uS4">
    <location>
        <begin position="1"/>
        <end position="208"/>
    </location>
</feature>
<feature type="domain" description="S4 RNA-binding" evidence="1">
    <location>
        <begin position="95"/>
        <end position="157"/>
    </location>
</feature>
<reference key="1">
    <citation type="submission" date="2004-12" db="EMBL/GenBank/DDBJ databases">
        <title>The genome sequence of Borrelia hermsii and Borrelia turicatae: comparative analysis of two agents of endemic N. America relapsing fever.</title>
        <authorList>
            <person name="Porcella S.F."/>
            <person name="Raffel S.J."/>
            <person name="Schrumpf M.E."/>
            <person name="Montgomery B."/>
            <person name="Smith T."/>
            <person name="Schwan T.G."/>
        </authorList>
    </citation>
    <scope>NUCLEOTIDE SEQUENCE [LARGE SCALE GENOMIC DNA]</scope>
    <source>
        <strain>HS1 / DAH</strain>
    </source>
</reference>
<evidence type="ECO:0000255" key="1">
    <source>
        <dbReference type="HAMAP-Rule" id="MF_01306"/>
    </source>
</evidence>
<evidence type="ECO:0000305" key="2"/>
<proteinExistence type="inferred from homology"/>
<keyword id="KW-0687">Ribonucleoprotein</keyword>
<keyword id="KW-0689">Ribosomal protein</keyword>
<keyword id="KW-0694">RNA-binding</keyword>
<keyword id="KW-0699">rRNA-binding</keyword>
<gene>
    <name evidence="1" type="primary">rpsD</name>
    <name type="ordered locus">BH0615</name>
</gene>
<sequence>MNRKNIAKGKLVRRFGINIFEQPKYDKLLKKKPNPPGMHGRSRRAKITEYGKQLIEKQKVKFTYGISERQLTNIFKEARRQHGVTGDNLLALLERRIDNVVYRAGFAISRAHARQIVSHGIIMLNGRRVTIPSITLRANDIIQVKEKDSLKKLVRSNIEKTSTLRKLPTWIEVNADDLNVKITRPPSRDEIPTLANEQMIVEYYSKRA</sequence>
<name>RS4_BORHD</name>
<comment type="function">
    <text evidence="1">One of the primary rRNA binding proteins, it binds directly to 16S rRNA where it nucleates assembly of the body of the 30S subunit.</text>
</comment>
<comment type="function">
    <text evidence="1">With S5 and S12 plays an important role in translational accuracy.</text>
</comment>
<comment type="subunit">
    <text evidence="1">Part of the 30S ribosomal subunit. Contacts protein S5. The interaction surface between S4 and S5 is involved in control of translational fidelity.</text>
</comment>
<comment type="similarity">
    <text evidence="1">Belongs to the universal ribosomal protein uS4 family.</text>
</comment>
<dbReference type="EMBL" id="CP000048">
    <property type="protein sequence ID" value="AAX17117.1"/>
    <property type="molecule type" value="Genomic_DNA"/>
</dbReference>
<dbReference type="RefSeq" id="WP_012422368.1">
    <property type="nucleotide sequence ID" value="NZ_CP073136.1"/>
</dbReference>
<dbReference type="SMR" id="B2S0W1"/>
<dbReference type="GeneID" id="71843436"/>
<dbReference type="KEGG" id="bhr:BH0615"/>
<dbReference type="HOGENOM" id="CLU_092403_0_4_12"/>
<dbReference type="Proteomes" id="UP000008834">
    <property type="component" value="Chromosome"/>
</dbReference>
<dbReference type="GO" id="GO:0015935">
    <property type="term" value="C:small ribosomal subunit"/>
    <property type="evidence" value="ECO:0007669"/>
    <property type="project" value="InterPro"/>
</dbReference>
<dbReference type="GO" id="GO:0019843">
    <property type="term" value="F:rRNA binding"/>
    <property type="evidence" value="ECO:0007669"/>
    <property type="project" value="UniProtKB-UniRule"/>
</dbReference>
<dbReference type="GO" id="GO:0003735">
    <property type="term" value="F:structural constituent of ribosome"/>
    <property type="evidence" value="ECO:0007669"/>
    <property type="project" value="InterPro"/>
</dbReference>
<dbReference type="GO" id="GO:0042274">
    <property type="term" value="P:ribosomal small subunit biogenesis"/>
    <property type="evidence" value="ECO:0007669"/>
    <property type="project" value="TreeGrafter"/>
</dbReference>
<dbReference type="GO" id="GO:0006412">
    <property type="term" value="P:translation"/>
    <property type="evidence" value="ECO:0007669"/>
    <property type="project" value="UniProtKB-UniRule"/>
</dbReference>
<dbReference type="CDD" id="cd00165">
    <property type="entry name" value="S4"/>
    <property type="match status" value="1"/>
</dbReference>
<dbReference type="FunFam" id="3.10.290.10:FF:000001">
    <property type="entry name" value="30S ribosomal protein S4"/>
    <property type="match status" value="1"/>
</dbReference>
<dbReference type="Gene3D" id="1.10.1050.10">
    <property type="entry name" value="Ribosomal Protein S4 Delta 41, Chain A, domain 1"/>
    <property type="match status" value="1"/>
</dbReference>
<dbReference type="Gene3D" id="3.10.290.10">
    <property type="entry name" value="RNA-binding S4 domain"/>
    <property type="match status" value="1"/>
</dbReference>
<dbReference type="HAMAP" id="MF_01306_B">
    <property type="entry name" value="Ribosomal_uS4_B"/>
    <property type="match status" value="1"/>
</dbReference>
<dbReference type="InterPro" id="IPR022801">
    <property type="entry name" value="Ribosomal_uS4"/>
</dbReference>
<dbReference type="InterPro" id="IPR005709">
    <property type="entry name" value="Ribosomal_uS4_bac-type"/>
</dbReference>
<dbReference type="InterPro" id="IPR018079">
    <property type="entry name" value="Ribosomal_uS4_CS"/>
</dbReference>
<dbReference type="InterPro" id="IPR001912">
    <property type="entry name" value="Ribosomal_uS4_N"/>
</dbReference>
<dbReference type="InterPro" id="IPR002942">
    <property type="entry name" value="S4_RNA-bd"/>
</dbReference>
<dbReference type="InterPro" id="IPR036986">
    <property type="entry name" value="S4_RNA-bd_sf"/>
</dbReference>
<dbReference type="NCBIfam" id="NF003717">
    <property type="entry name" value="PRK05327.1"/>
    <property type="match status" value="1"/>
</dbReference>
<dbReference type="NCBIfam" id="TIGR01017">
    <property type="entry name" value="rpsD_bact"/>
    <property type="match status" value="1"/>
</dbReference>
<dbReference type="PANTHER" id="PTHR11831">
    <property type="entry name" value="30S 40S RIBOSOMAL PROTEIN"/>
    <property type="match status" value="1"/>
</dbReference>
<dbReference type="PANTHER" id="PTHR11831:SF4">
    <property type="entry name" value="SMALL RIBOSOMAL SUBUNIT PROTEIN US4M"/>
    <property type="match status" value="1"/>
</dbReference>
<dbReference type="Pfam" id="PF00163">
    <property type="entry name" value="Ribosomal_S4"/>
    <property type="match status" value="1"/>
</dbReference>
<dbReference type="Pfam" id="PF01479">
    <property type="entry name" value="S4"/>
    <property type="match status" value="1"/>
</dbReference>
<dbReference type="SMART" id="SM01390">
    <property type="entry name" value="Ribosomal_S4"/>
    <property type="match status" value="1"/>
</dbReference>
<dbReference type="SMART" id="SM00363">
    <property type="entry name" value="S4"/>
    <property type="match status" value="1"/>
</dbReference>
<dbReference type="SUPFAM" id="SSF55174">
    <property type="entry name" value="Alpha-L RNA-binding motif"/>
    <property type="match status" value="1"/>
</dbReference>
<dbReference type="PROSITE" id="PS00632">
    <property type="entry name" value="RIBOSOMAL_S4"/>
    <property type="match status" value="1"/>
</dbReference>
<dbReference type="PROSITE" id="PS50889">
    <property type="entry name" value="S4"/>
    <property type="match status" value="1"/>
</dbReference>